<evidence type="ECO:0000255" key="1"/>
<evidence type="ECO:0000269" key="2">
    <source>
    </source>
</evidence>
<evidence type="ECO:0000269" key="3">
    <source>
    </source>
</evidence>
<evidence type="ECO:0000269" key="4">
    <source>
    </source>
</evidence>
<evidence type="ECO:0000269" key="5">
    <source>
    </source>
</evidence>
<evidence type="ECO:0000269" key="6">
    <source>
    </source>
</evidence>
<evidence type="ECO:0000305" key="7"/>
<feature type="chain" id="PRO_0000401474" description="Aluminum-activated malate transporter 1">
    <location>
        <begin position="1"/>
        <end position="459"/>
    </location>
</feature>
<feature type="topological domain" description="Extracellular" evidence="6">
    <location>
        <begin position="1"/>
        <end position="52"/>
    </location>
</feature>
<feature type="transmembrane region" description="Helical" evidence="1">
    <location>
        <begin position="53"/>
        <end position="73"/>
    </location>
</feature>
<feature type="transmembrane region" description="Helical" evidence="1">
    <location>
        <begin position="74"/>
        <end position="94"/>
    </location>
</feature>
<feature type="topological domain" description="Extracellular" evidence="6">
    <location>
        <begin position="95"/>
        <end position="108"/>
    </location>
</feature>
<feature type="transmembrane region" description="Helical" evidence="1">
    <location>
        <begin position="109"/>
        <end position="129"/>
    </location>
</feature>
<feature type="topological domain" description="Cytoplasmic" evidence="6">
    <location>
        <begin position="130"/>
        <end position="137"/>
    </location>
</feature>
<feature type="transmembrane region" description="Helical" evidence="1">
    <location>
        <begin position="138"/>
        <end position="158"/>
    </location>
</feature>
<feature type="topological domain" description="Extracellular" evidence="6">
    <location>
        <begin position="159"/>
        <end position="160"/>
    </location>
</feature>
<feature type="transmembrane region" description="Helical" evidence="1">
    <location>
        <begin position="161"/>
        <end position="181"/>
    </location>
</feature>
<feature type="topological domain" description="Cytoplasmic" evidence="6">
    <location>
        <begin position="182"/>
        <end position="199"/>
    </location>
</feature>
<feature type="transmembrane region" description="Helical" evidence="1">
    <location>
        <begin position="200"/>
        <end position="220"/>
    </location>
</feature>
<feature type="topological domain" description="Extracellular" evidence="6">
    <location>
        <begin position="221"/>
        <end position="459"/>
    </location>
</feature>
<feature type="sequence variant" description="In strain: cv. Cranbrook, cv. Empraba, cv. ET8 and cv. Tasman.">
    <original>V</original>
    <variation>M</variation>
    <location>
        <position position="140"/>
    </location>
</feature>
<feature type="sequence variant" description="In strain: cv. Maringa.">
    <original>L</original>
    <variation>I</variation>
    <location>
        <position position="208"/>
    </location>
</feature>
<feature type="sequence variant" description="In strain: cv. Cranbrook, cv. Empraba, cv. ET8 and cv. Tasman.">
    <original>S</original>
    <variation>F</variation>
    <location>
        <position position="260"/>
    </location>
</feature>
<organism>
    <name type="scientific">Triticum aestivum</name>
    <name type="common">Wheat</name>
    <dbReference type="NCBI Taxonomy" id="4565"/>
    <lineage>
        <taxon>Eukaryota</taxon>
        <taxon>Viridiplantae</taxon>
        <taxon>Streptophyta</taxon>
        <taxon>Embryophyta</taxon>
        <taxon>Tracheophyta</taxon>
        <taxon>Spermatophyta</taxon>
        <taxon>Magnoliopsida</taxon>
        <taxon>Liliopsida</taxon>
        <taxon>Poales</taxon>
        <taxon>Poaceae</taxon>
        <taxon>BOP clade</taxon>
        <taxon>Pooideae</taxon>
        <taxon>Triticodae</taxon>
        <taxon>Triticeae</taxon>
        <taxon>Triticinae</taxon>
        <taxon>Triticum</taxon>
    </lineage>
</organism>
<protein>
    <recommendedName>
        <fullName>Aluminum-activated malate transporter 1</fullName>
        <shortName>TaALMT1</shortName>
    </recommendedName>
</protein>
<keyword id="KW-1003">Cell membrane</keyword>
<keyword id="KW-0407">Ion channel</keyword>
<keyword id="KW-0406">Ion transport</keyword>
<keyword id="KW-0472">Membrane</keyword>
<keyword id="KW-1185">Reference proteome</keyword>
<keyword id="KW-0812">Transmembrane</keyword>
<keyword id="KW-1133">Transmembrane helix</keyword>
<keyword id="KW-0813">Transport</keyword>
<gene>
    <name type="primary">ALMT1</name>
    <name type="synonym">ALMT1-1</name>
    <name type="synonym">ALMT1-2</name>
</gene>
<reference key="1">
    <citation type="journal article" date="2004" name="Plant J.">
        <title>A wheat gene encoding an aluminum-activated malate transporter.</title>
        <authorList>
            <person name="Sasaki T."/>
            <person name="Yamamoto Y."/>
            <person name="Ezaki B."/>
            <person name="Katsuhara M."/>
            <person name="Ahn S.J."/>
            <person name="Ryan P.R."/>
            <person name="Delhaize E."/>
            <person name="Matsumoto H."/>
        </authorList>
    </citation>
    <scope>NUCLEOTIDE SEQUENCE [MRNA]</scope>
    <scope>FUNCTION</scope>
    <scope>TISSUE SPECIFICITY</scope>
    <scope>ACTIVITY REGULATION</scope>
    <scope>INDUCTION BY ALUMINUM</scope>
    <source>
        <strain>cv. ES8</strain>
        <strain>cv. ET8</strain>
        <tissue>Root tip</tissue>
    </source>
</reference>
<reference key="2">
    <citation type="journal article" date="2006" name="Plant Cell Physiol.">
        <title>Sequence upstream of the wheat (Triticum aestivum L.) ALMT1 gene and its relationship to aluminum resistance.</title>
        <authorList>
            <person name="Sasaki T."/>
            <person name="Ryan P.R."/>
            <person name="Delhaize E."/>
            <person name="Hebb D.M."/>
            <person name="Ogihara Y."/>
            <person name="Kawaura K."/>
            <person name="Noda K."/>
            <person name="Kojima T."/>
            <person name="Toyoda A."/>
            <person name="Matsumoto H."/>
            <person name="Yamamoto Y."/>
        </authorList>
    </citation>
    <scope>NUCLEOTIDE SEQUENCE [GENOMIC DNA]</scope>
    <source>
        <strain>cv. Chinese Spring</strain>
    </source>
</reference>
<reference key="3">
    <citation type="journal article" date="2005" name="Genome">
        <title>Molecular characterization and mapping of ALMT1, the aluminium-tolerance gene of bread wheat (Triticum aestivum L.).</title>
        <authorList>
            <person name="Raman H."/>
            <person name="Zhang K."/>
            <person name="Cakir M."/>
            <person name="Appels R."/>
            <person name="Garvin D.F."/>
            <person name="Maron L.G."/>
            <person name="Kochian L.V."/>
            <person name="Moroni J.S."/>
            <person name="Raman R."/>
            <person name="Imtiaz M."/>
            <person name="Drake-Brockman F."/>
            <person name="Waters I."/>
            <person name="Martin P."/>
            <person name="Sasaki T."/>
            <person name="Yamamoto Y."/>
            <person name="Matsumoto H."/>
            <person name="Hebb D.M."/>
            <person name="Delhaize E."/>
            <person name="Ryan P.R."/>
        </authorList>
    </citation>
    <scope>NUCLEOTIDE SEQUENCE [GENOMIC DNA]</scope>
    <scope>FUNCTION</scope>
    <scope>INDUCTION BY ALUMINUM</scope>
    <source>
        <strain>cv. Chinese Spring</strain>
        <strain>cv. Cranbrook</strain>
        <strain>cv. Empraba</strain>
        <strain>cv. ES8</strain>
        <strain>cv. ET8</strain>
        <strain>cv. Halberd</strain>
        <strain>cv. Janz</strain>
        <strain>cv. Maringa</strain>
        <strain>cv. Spica</strain>
        <strain>cv. Sunco</strain>
        <strain>cv. Tasman</strain>
    </source>
</reference>
<reference key="4">
    <citation type="journal article" date="2005" name="Plant Cell Physiol.">
        <title>Evidence for the plasma membrane localization of Al-activated malate transporter (ALMT1).</title>
        <authorList>
            <person name="Yamaguchi M."/>
            <person name="Sasaki T."/>
            <person name="Sivaguru M."/>
            <person name="Yamamoto Y."/>
            <person name="Osawa H."/>
            <person name="Ahn S.J."/>
            <person name="Matsumoto H."/>
        </authorList>
    </citation>
    <scope>FUNCTION</scope>
    <scope>SUBCELLULAR LOCATION</scope>
    <scope>TISSUE SPECIFICITY</scope>
    <scope>INDUCTION BY ALUMINUM</scope>
</reference>
<reference key="5">
    <citation type="journal article" date="2007" name="Plant Signal. Behav.">
        <title>The membrane topology of ALMT1, an aluminum-activated malate transport protein in wheat (Triticum aestivum).</title>
        <authorList>
            <person name="Motoda H."/>
            <person name="Sasaki T."/>
            <person name="Kano Y."/>
            <person name="Ryan P.R."/>
            <person name="Delhaize E."/>
            <person name="Matsumoto H."/>
            <person name="Yamamoto Y."/>
        </authorList>
    </citation>
    <scope>TOPOLOGY</scope>
</reference>
<reference key="6">
    <citation type="journal article" date="2008" name="Plant Physiol.">
        <title>Novel properties of the wheat aluminum tolerance organic acid transporter (TaALMT1) revealed by electrophysiological characterization in Xenopus Oocytes: functional and structural implications.</title>
        <authorList>
            <person name="Pineros M.A."/>
            <person name="Cancado G.M."/>
            <person name="Kochian L.V."/>
        </authorList>
    </citation>
    <scope>FUNCTION</scope>
    <scope>ACTIVITY REGULATION</scope>
</reference>
<name>ALMT1_WHEAT</name>
<sequence length="459" mass="49581">MDIDHGRESDGEMVGTIASCGLLLHSLLAGLGRRAAGFARKVGGAAREDPRRVAHSLKVGLALALVSVVYFVTPLFNGLGVSAIWAVLTVVVVMEYTVGATLSKGLNRALATLVAGCIAVGAHQLAELAERCGDQGEPIVLTVLVFFVASAATFLRFIPEIKAKYDYGVTIFILTFGLVAVSSYRVEELIQLAHQRFYTIAVGVFICLCTTVFLFPVWAGEDVHKLASGNLDKLAQFIEGMEFNCFGENSVANNFGGKDSPQMHKSVLNSKATEDSLCTFAKWEPRHGQFRFRHPWSQYQKLGTLCRQCASSMEALASYVITTSKTQCPAAANPELSCKVRKTCGEMSLHSSKVLRDLAMATRTMTVPSPVNITMATAVKAAESLRSELAENTALLQVMHVAVTATLLADLVDRVKEIAECVDVLARLAHFKNPEDTKNVVVSTVSRGIDEPLPDVVIL</sequence>
<dbReference type="EMBL" id="AB081803">
    <property type="protein sequence ID" value="BAD10882.1"/>
    <property type="molecule type" value="mRNA"/>
</dbReference>
<dbReference type="EMBL" id="AB081804">
    <property type="protein sequence ID" value="BAD10883.1"/>
    <property type="molecule type" value="mRNA"/>
</dbReference>
<dbReference type="EMBL" id="AB243164">
    <property type="protein sequence ID" value="BAF03619.1"/>
    <property type="molecule type" value="Genomic_DNA"/>
</dbReference>
<dbReference type="EMBL" id="DQ072260">
    <property type="protein sequence ID" value="AAZ22842.1"/>
    <property type="molecule type" value="Genomic_DNA"/>
</dbReference>
<dbReference type="EMBL" id="DQ072261">
    <property type="protein sequence ID" value="AAZ22843.1"/>
    <property type="molecule type" value="Genomic_DNA"/>
</dbReference>
<dbReference type="EMBL" id="DQ072262">
    <property type="protein sequence ID" value="AAZ22844.1"/>
    <property type="molecule type" value="Genomic_DNA"/>
</dbReference>
<dbReference type="EMBL" id="DQ072263">
    <property type="protein sequence ID" value="AAZ22845.1"/>
    <property type="molecule type" value="Genomic_DNA"/>
</dbReference>
<dbReference type="EMBL" id="DQ072264">
    <property type="protein sequence ID" value="AAZ22846.1"/>
    <property type="molecule type" value="Genomic_DNA"/>
</dbReference>
<dbReference type="EMBL" id="DQ072265">
    <property type="protein sequence ID" value="AAZ22847.1"/>
    <property type="molecule type" value="Genomic_DNA"/>
</dbReference>
<dbReference type="EMBL" id="DQ072266">
    <property type="protein sequence ID" value="AAZ22848.1"/>
    <property type="molecule type" value="Genomic_DNA"/>
</dbReference>
<dbReference type="EMBL" id="DQ072267">
    <property type="protein sequence ID" value="AAZ22849.1"/>
    <property type="molecule type" value="Genomic_DNA"/>
</dbReference>
<dbReference type="EMBL" id="DQ072268">
    <property type="protein sequence ID" value="AAZ22850.1"/>
    <property type="molecule type" value="Genomic_DNA"/>
</dbReference>
<dbReference type="EMBL" id="DQ072269">
    <property type="protein sequence ID" value="AAZ22851.1"/>
    <property type="molecule type" value="Genomic_DNA"/>
</dbReference>
<dbReference type="EMBL" id="DQ072270">
    <property type="protein sequence ID" value="AAZ22852.1"/>
    <property type="molecule type" value="Genomic_DNA"/>
</dbReference>
<dbReference type="SMR" id="Q76LB1"/>
<dbReference type="STRING" id="4565.Q76LB1"/>
<dbReference type="TCDB" id="2.A.85.2.5">
    <property type="family name" value="the aromatic acid exporter (arae) family"/>
</dbReference>
<dbReference type="PaxDb" id="4565-Traes_4DL_8E805248E.1"/>
<dbReference type="EnsemblPlants" id="TraesCS4D02G283600.2">
    <property type="protein sequence ID" value="TraesCS4D02G283600.2"/>
    <property type="gene ID" value="TraesCS4D02G283600"/>
</dbReference>
<dbReference type="EnsemblPlants" id="TraesCS4D03G0673400.1">
    <property type="protein sequence ID" value="TraesCS4D03G0673400.1.CDS"/>
    <property type="gene ID" value="TraesCS4D03G0673400"/>
</dbReference>
<dbReference type="EnsemblPlants" id="TraesKAR4D01G0328230.1">
    <property type="protein sequence ID" value="cds.TraesKAR4D01G0328230.1"/>
    <property type="gene ID" value="TraesKAR4D01G0328230"/>
</dbReference>
<dbReference type="EnsemblPlants" id="TraesLAC4D03G02492720.1">
    <property type="protein sequence ID" value="TraesLAC4D03G02492720.1"/>
    <property type="gene ID" value="TraesLAC4D03G02492720"/>
</dbReference>
<dbReference type="EnsemblPlants" id="TraesLDM4D03G02541560.1">
    <property type="protein sequence ID" value="TraesLDM4D03G02541560.1"/>
    <property type="gene ID" value="TraesLDM4D03G02541560"/>
</dbReference>
<dbReference type="EnsemblPlants" id="TraesMAC4D03G02537190.1">
    <property type="protein sequence ID" value="TraesMAC4D03G02537190.1"/>
    <property type="gene ID" value="TraesMAC4D03G02537190"/>
</dbReference>
<dbReference type="EnsemblPlants" id="TraesNOR4D03G02556390.1">
    <property type="protein sequence ID" value="TraesNOR4D03G02556390.1"/>
    <property type="gene ID" value="TraesNOR4D03G02556390"/>
</dbReference>
<dbReference type="EnsemblPlants" id="TraesSTA4D03G02534440.1">
    <property type="protein sequence ID" value="TraesSTA4D03G02534440.1"/>
    <property type="gene ID" value="TraesSTA4D03G02534440"/>
</dbReference>
<dbReference type="Gramene" id="TraesCS4D02G283600.2">
    <property type="protein sequence ID" value="TraesCS4D02G283600.2"/>
    <property type="gene ID" value="TraesCS4D02G283600"/>
</dbReference>
<dbReference type="Gramene" id="TraesCS4D03G0673400.1">
    <property type="protein sequence ID" value="TraesCS4D03G0673400.1.CDS"/>
    <property type="gene ID" value="TraesCS4D03G0673400"/>
</dbReference>
<dbReference type="Gramene" id="TraesKAR4D01G0328230.1">
    <property type="protein sequence ID" value="cds.TraesKAR4D01G0328230.1"/>
    <property type="gene ID" value="TraesKAR4D01G0328230"/>
</dbReference>
<dbReference type="Gramene" id="TraesLAC4D03G02492720.1">
    <property type="protein sequence ID" value="TraesLAC4D03G02492720.1"/>
    <property type="gene ID" value="TraesLAC4D03G02492720"/>
</dbReference>
<dbReference type="Gramene" id="TraesLDM4D03G02541560.1">
    <property type="protein sequence ID" value="TraesLDM4D03G02541560.1"/>
    <property type="gene ID" value="TraesLDM4D03G02541560"/>
</dbReference>
<dbReference type="Gramene" id="TraesMAC4D03G02537190.1">
    <property type="protein sequence ID" value="TraesMAC4D03G02537190.1"/>
    <property type="gene ID" value="TraesMAC4D03G02537190"/>
</dbReference>
<dbReference type="Gramene" id="TraesNOR4D03G02556390.1">
    <property type="protein sequence ID" value="TraesNOR4D03G02556390.1"/>
    <property type="gene ID" value="TraesNOR4D03G02556390"/>
</dbReference>
<dbReference type="Gramene" id="TraesSTA4D03G02534440.1">
    <property type="protein sequence ID" value="TraesSTA4D03G02534440.1"/>
    <property type="gene ID" value="TraesSTA4D03G02534440"/>
</dbReference>
<dbReference type="eggNOG" id="KOG4711">
    <property type="taxonomic scope" value="Eukaryota"/>
</dbReference>
<dbReference type="Proteomes" id="UP000019116">
    <property type="component" value="Chromosome 4D"/>
</dbReference>
<dbReference type="ExpressionAtlas" id="Q76LB1">
    <property type="expression patterns" value="baseline"/>
</dbReference>
<dbReference type="GO" id="GO:0009705">
    <property type="term" value="C:plant-type vacuole membrane"/>
    <property type="evidence" value="ECO:0000318"/>
    <property type="project" value="GO_Central"/>
</dbReference>
<dbReference type="GO" id="GO:0005886">
    <property type="term" value="C:plasma membrane"/>
    <property type="evidence" value="ECO:0007669"/>
    <property type="project" value="UniProtKB-SubCell"/>
</dbReference>
<dbReference type="GO" id="GO:0015743">
    <property type="term" value="P:malate transport"/>
    <property type="evidence" value="ECO:0007669"/>
    <property type="project" value="InterPro"/>
</dbReference>
<dbReference type="GO" id="GO:0034220">
    <property type="term" value="P:monoatomic ion transmembrane transport"/>
    <property type="evidence" value="ECO:0007669"/>
    <property type="project" value="UniProtKB-KW"/>
</dbReference>
<dbReference type="InterPro" id="IPR020966">
    <property type="entry name" value="ALMT"/>
</dbReference>
<dbReference type="PANTHER" id="PTHR31086">
    <property type="entry name" value="ALUMINUM-ACTIVATED MALATE TRANSPORTER 10"/>
    <property type="match status" value="1"/>
</dbReference>
<dbReference type="Pfam" id="PF11744">
    <property type="entry name" value="ALMT"/>
    <property type="match status" value="1"/>
</dbReference>
<accession>Q76LB1</accession>
<accession>Q3SBD8</accession>
<accession>Q76LB2</accession>
<comment type="function">
    <text evidence="2 3 4 5">Malate transporter critical for aluminum tolerance. Permeable to chloride, nitrate, sulfate and malate.</text>
</comment>
<comment type="activity regulation">
    <text evidence="2 5">Activated by external aluminum. The enhancement of malate transport is not due to alteration in the selectivity properties but is due to an increased anion permeability.</text>
</comment>
<comment type="subcellular location">
    <subcellularLocation>
        <location evidence="3">Cell membrane</location>
        <topology evidence="3">Multi-pass membrane protein</topology>
    </subcellularLocation>
</comment>
<comment type="tissue specificity">
    <text evidence="2 3">Detected in root tips.</text>
</comment>
<comment type="induction">
    <text evidence="2 3 4">Not induced by aluminum.</text>
</comment>
<comment type="similarity">
    <text evidence="7">Belongs to the aromatic acid exporter (TC 2.A.85) family.</text>
</comment>
<proteinExistence type="evidence at protein level"/>